<feature type="chain" id="PRO_0000417887" description="Putative CRISPR-associated protein SSO1401">
    <location>
        <begin position="1"/>
        <end position="323"/>
    </location>
</feature>
<proteinExistence type="evidence at protein level"/>
<organism>
    <name type="scientific">Saccharolobus solfataricus (strain ATCC 35092 / DSM 1617 / JCM 11322 / P2)</name>
    <name type="common">Sulfolobus solfataricus</name>
    <dbReference type="NCBI Taxonomy" id="273057"/>
    <lineage>
        <taxon>Archaea</taxon>
        <taxon>Thermoproteota</taxon>
        <taxon>Thermoprotei</taxon>
        <taxon>Sulfolobales</taxon>
        <taxon>Sulfolobaceae</taxon>
        <taxon>Saccharolobus</taxon>
    </lineage>
</organism>
<name>Y1401_SACS2</name>
<protein>
    <recommendedName>
        <fullName>Putative CRISPR-associated protein SSO1401</fullName>
    </recommendedName>
</protein>
<dbReference type="EMBL" id="AE006641">
    <property type="protein sequence ID" value="AAK41636.1"/>
    <property type="molecule type" value="Genomic_DNA"/>
</dbReference>
<dbReference type="PIR" id="E90297">
    <property type="entry name" value="E90297"/>
</dbReference>
<dbReference type="RefSeq" id="WP_009988397.1">
    <property type="nucleotide sequence ID" value="NC_002754.1"/>
</dbReference>
<dbReference type="STRING" id="273057.SSO1401"/>
<dbReference type="PaxDb" id="273057-SSO1401"/>
<dbReference type="EnsemblBacteria" id="AAK41636">
    <property type="protein sequence ID" value="AAK41636"/>
    <property type="gene ID" value="SSO1401"/>
</dbReference>
<dbReference type="KEGG" id="sso:SSO1401"/>
<dbReference type="PATRIC" id="fig|273057.12.peg.1417"/>
<dbReference type="eggNOG" id="arCOG07297">
    <property type="taxonomic scope" value="Archaea"/>
</dbReference>
<dbReference type="HOGENOM" id="CLU_859487_0_0_2"/>
<dbReference type="InParanoid" id="Q97YC5"/>
<dbReference type="Proteomes" id="UP000001974">
    <property type="component" value="Chromosome"/>
</dbReference>
<dbReference type="GO" id="GO:0051607">
    <property type="term" value="P:defense response to virus"/>
    <property type="evidence" value="ECO:0007669"/>
    <property type="project" value="UniProtKB-KW"/>
</dbReference>
<accession>Q97YC5</accession>
<sequence>MVFKINLPPEGLFARSLVISELLGLNNVGISIDNDVVNIERKEEFKDNLKNELSQFKLVFNKLKTYKKNYANEVNLAEKVFNGDVEEFFKEDKEEYFLPLIFPEIMEAEKWFGGWSGSGKGSKRTIGVNRQSFILSLLSLGKYQLVSYRAAKEQVTVLALVDTTVMSDMCKPSKKKELRVQSNLIAQLSHISRLLIFSTILDEQGCQEVLLLKEGTHRAEIYERNSHTSLRPLIRFWTLVDDDSVERRITSLANQSPDSLNKVSNYIFEGIRGTLSPVEVAYMIARETYLKEEQSPLTSWDVKKIREALERMRVEMEEVYSST</sequence>
<evidence type="ECO:0000250" key="1"/>
<evidence type="ECO:0000269" key="2">
    <source>
    </source>
</evidence>
<comment type="function">
    <text evidence="1">CRISPR (clustered regularly interspaced short palindromic repeat) is an adaptive immune system that provides protection against mobile genetic elements (viruses, transposable elements and conjugative plasmids). CRISPR clusters contain spacers, sequences complementary to antecedent mobile elements, and target invading nucleic acids. CRISPR clusters are transcribed and processed into CRISPR RNA (crRNA) (By similarity).</text>
</comment>
<comment type="subunit">
    <text evidence="2">Sometimes seen associated with the aCascade ribonucleoprotein complex, minimally composed of Csa2 and Cas5a, which binds crRNA. Other probable components of aCascade in strain P1 are Cas6 and Csa5, while SSO1399, Cas5b (SSO1400) and SSO1401 have sometimes been seen weakly associated. The Csa2-Cas5a-crRNA complex also binds target DNA homologous to crRNA, probably forming an R-loop. Purified aCascade forms a filament about 6 nm in width.</text>
</comment>
<comment type="miscellaneous">
    <text>The aCascade complex was purified from strain P1.</text>
</comment>
<reference key="1">
    <citation type="journal article" date="2001" name="Proc. Natl. Acad. Sci. U.S.A.">
        <title>The complete genome of the crenarchaeon Sulfolobus solfataricus P2.</title>
        <authorList>
            <person name="She Q."/>
            <person name="Singh R.K."/>
            <person name="Confalonieri F."/>
            <person name="Zivanovic Y."/>
            <person name="Allard G."/>
            <person name="Awayez M.J."/>
            <person name="Chan-Weiher C.C.-Y."/>
            <person name="Clausen I.G."/>
            <person name="Curtis B.A."/>
            <person name="De Moors A."/>
            <person name="Erauso G."/>
            <person name="Fletcher C."/>
            <person name="Gordon P.M.K."/>
            <person name="Heikamp-de Jong I."/>
            <person name="Jeffries A.C."/>
            <person name="Kozera C.J."/>
            <person name="Medina N."/>
            <person name="Peng X."/>
            <person name="Thi-Ngoc H.P."/>
            <person name="Redder P."/>
            <person name="Schenk M.E."/>
            <person name="Theriault C."/>
            <person name="Tolstrup N."/>
            <person name="Charlebois R.L."/>
            <person name="Doolittle W.F."/>
            <person name="Duguet M."/>
            <person name="Gaasterland T."/>
            <person name="Garrett R.A."/>
            <person name="Ragan M.A."/>
            <person name="Sensen C.W."/>
            <person name="Van der Oost J."/>
        </authorList>
    </citation>
    <scope>NUCLEOTIDE SEQUENCE [LARGE SCALE GENOMIC DNA]</scope>
    <source>
        <strain>ATCC 35092 / DSM 1617 / JCM 11322 / P2</strain>
    </source>
</reference>
<reference key="2">
    <citation type="journal article" date="2011" name="J. Biol. Chem.">
        <title>Structural and functional characterization of an archaeal clustered regularly interspaced short palindromic repeat (CRISPR)-associated complex for antiviral defense (CASCADE).</title>
        <authorList>
            <person name="Lintner N.G."/>
            <person name="Kerou M."/>
            <person name="Brumfield S.K."/>
            <person name="Graham S."/>
            <person name="Liu H."/>
            <person name="Naismith J.H."/>
            <person name="Sdano M."/>
            <person name="Peng N."/>
            <person name="She Q."/>
            <person name="Copie V."/>
            <person name="Young M.J."/>
            <person name="White M.F."/>
            <person name="Lawrence C.M."/>
        </authorList>
    </citation>
    <scope>SUBUNIT</scope>
    <source>
        <strain>ATCC 35091 / DSM 1616 / JCM 8930 / NBRC 15331 / P1</strain>
    </source>
</reference>
<gene>
    <name type="ordered locus">SSO1401</name>
</gene>
<keyword id="KW-0051">Antiviral defense</keyword>
<keyword id="KW-1185">Reference proteome</keyword>